<protein>
    <recommendedName>
        <fullName>DNA maturase A</fullName>
    </recommendedName>
    <alternativeName>
        <fullName>DNA-packaging protein A</fullName>
    </alternativeName>
    <alternativeName>
        <fullName>GP18</fullName>
    </alternativeName>
</protein>
<name>VDMA_BPT3</name>
<sequence length="89" mass="10033">MEVDKSLIAFLEMLDTAMAQRMLADLANDEKRTPQLYNAINKLLDRHKFQIGKLQPDVHILGGLAGALEEYKEKVGDNGLTDDDIYTLQ</sequence>
<reference key="1">
    <citation type="journal article" date="1986" name="Virology">
        <title>Cloning and sequencing of the genetic right end of bacteriophage T3 DNA.</title>
        <authorList>
            <person name="Yamada M."/>
            <person name="Fujisawa H."/>
            <person name="Kato H."/>
            <person name="Hamada K."/>
            <person name="Minagawa T."/>
        </authorList>
    </citation>
    <scope>NUCLEOTIDE SEQUENCE [GENOMIC DNA]</scope>
</reference>
<reference key="2">
    <citation type="journal article" date="1986" name="Virology">
        <authorList>
            <person name="Yamada M."/>
            <person name="Fujisawa H."/>
            <person name="Kato H."/>
            <person name="Hamada K."/>
            <person name="Minagawa T."/>
        </authorList>
    </citation>
    <scope>ERRATUM OF PUBMED:3010556</scope>
</reference>
<accession>P10309</accession>
<dbReference type="EMBL" id="M14784">
    <property type="protein sequence ID" value="AAA92525.1"/>
    <property type="molecule type" value="Genomic_DNA"/>
</dbReference>
<dbReference type="PIR" id="C23476">
    <property type="entry name" value="JVBPT3"/>
</dbReference>
<dbReference type="RefSeq" id="NP_523344.1">
    <property type="nucleotide sequence ID" value="NC_003298.1"/>
</dbReference>
<dbReference type="KEGG" id="vg:927444"/>
<dbReference type="OrthoDB" id="24629at10239"/>
<dbReference type="InterPro" id="IPR024345">
    <property type="entry name" value="DNA_matur_Phage_T7-like"/>
</dbReference>
<dbReference type="Pfam" id="PF11123">
    <property type="entry name" value="DNA_Packaging_2"/>
    <property type="match status" value="1"/>
</dbReference>
<feature type="chain" id="PRO_0000106534" description="DNA maturase A">
    <location>
        <begin position="1"/>
        <end position="89"/>
    </location>
</feature>
<organism>
    <name type="scientific">Enterobacteria phage T3</name>
    <name type="common">Bacteriophage T3</name>
    <dbReference type="NCBI Taxonomy" id="10759"/>
    <lineage>
        <taxon>Viruses</taxon>
        <taxon>Duplodnaviria</taxon>
        <taxon>Heunggongvirae</taxon>
        <taxon>Uroviricota</taxon>
        <taxon>Caudoviricetes</taxon>
        <taxon>Autographiviridae</taxon>
        <taxon>Studiervirinae</taxon>
        <taxon>Teetrevirus</taxon>
        <taxon>Teetrevirus T3</taxon>
    </lineage>
</organism>
<gene>
    <name type="primary">18</name>
</gene>
<proteinExistence type="predicted"/>
<organismHost>
    <name type="scientific">Escherichia coli</name>
    <dbReference type="NCBI Taxonomy" id="562"/>
</organismHost>
<keyword id="KW-0231">Viral genome packaging</keyword>
<keyword id="KW-1188">Viral release from host cell</keyword>
<comment type="function">
    <text>During the growth of this phage, DNA is synthesized as concatemers. During DNA packaging mature monomers are cut from the concatemers.</text>
</comment>
<comment type="subunit">
    <text>Gp18 and gp19 associate with DNA and prohead.</text>
</comment>